<sequence>MEMESFMDDLLNFSVPEEEEDDDEHTQPPRNITRRKTGLRPTDSFGLFNTDDLGVVEEEDLEWISNKNAFPVIETFVGVLPSEHFPITSLLEREATEVKQLSPVSVLETSSHSSTTTTSNSSGGSNGSTAVATTTTTPTIMSCCVGFKAPAKARSKRRRTGRRDLRVLWTGNEQGGIQKKKTMTVAAAALIMGRKCQHCGAEKTPQWRAGPAGPKTLCNACGVRYKSGRLVPEYRPANSPTFTAELHSNSHRKIVEMRKQYQSGDGDGDRKDCG</sequence>
<organism>
    <name type="scientific">Arabidopsis thaliana</name>
    <name type="common">Mouse-ear cress</name>
    <dbReference type="NCBI Taxonomy" id="3702"/>
    <lineage>
        <taxon>Eukaryota</taxon>
        <taxon>Viridiplantae</taxon>
        <taxon>Streptophyta</taxon>
        <taxon>Embryophyta</taxon>
        <taxon>Tracheophyta</taxon>
        <taxon>Spermatophyta</taxon>
        <taxon>Magnoliopsida</taxon>
        <taxon>eudicotyledons</taxon>
        <taxon>Gunneridae</taxon>
        <taxon>Pentapetalae</taxon>
        <taxon>rosids</taxon>
        <taxon>malvids</taxon>
        <taxon>Brassicales</taxon>
        <taxon>Brassicaceae</taxon>
        <taxon>Camelineae</taxon>
        <taxon>Arabidopsis</taxon>
    </lineage>
</organism>
<keyword id="KW-0010">Activator</keyword>
<keyword id="KW-0238">DNA-binding</keyword>
<keyword id="KW-0479">Metal-binding</keyword>
<keyword id="KW-0539">Nucleus</keyword>
<keyword id="KW-1185">Reference proteome</keyword>
<keyword id="KW-0804">Transcription</keyword>
<keyword id="KW-0805">Transcription regulation</keyword>
<keyword id="KW-0862">Zinc</keyword>
<keyword id="KW-0863">Zinc-finger</keyword>
<gene>
    <name type="primary">GATA1</name>
    <name type="ordered locus">At3g24050</name>
    <name type="ORF">F14O13.24</name>
</gene>
<accession>Q8LAU9</accession>
<accession>O49740</accession>
<proteinExistence type="evidence at transcript level"/>
<evidence type="ECO:0000255" key="1"/>
<evidence type="ECO:0000255" key="2">
    <source>
        <dbReference type="PROSITE-ProRule" id="PRU00094"/>
    </source>
</evidence>
<evidence type="ECO:0000256" key="3">
    <source>
        <dbReference type="SAM" id="MobiDB-lite"/>
    </source>
</evidence>
<evidence type="ECO:0000269" key="4">
    <source>
    </source>
</evidence>
<evidence type="ECO:0000305" key="5"/>
<name>GATA1_ARATH</name>
<protein>
    <recommendedName>
        <fullName>GATA transcription factor 1</fullName>
        <shortName>AtGATA-1</shortName>
    </recommendedName>
</protein>
<comment type="function">
    <text evidence="4">Transcriptional activator that specifically binds 5'-GATA-3' or 5'-GAT-3' motifs within gene promoters. May be involved in the regulation of some light-responsive genes.</text>
</comment>
<comment type="subcellular location">
    <subcellularLocation>
        <location evidence="5">Nucleus</location>
    </subcellularLocation>
</comment>
<comment type="tissue specificity">
    <text evidence="4">Mostly expressed in roots. Also expressed in stems, flowers and leaves.</text>
</comment>
<comment type="similarity">
    <text evidence="5">Belongs to the type IV zinc-finger family. Class A subfamily.</text>
</comment>
<comment type="sequence caution" evidence="5">
    <conflict type="erroneous initiation">
        <sequence resource="EMBL-CDS" id="AAM65139"/>
    </conflict>
    <text>Truncated N-terminus.</text>
</comment>
<dbReference type="EMBL" id="Y13648">
    <property type="protein sequence ID" value="CAA73999.1"/>
    <property type="molecule type" value="mRNA"/>
</dbReference>
<dbReference type="EMBL" id="AP001297">
    <property type="protein sequence ID" value="BAB03023.1"/>
    <property type="molecule type" value="Genomic_DNA"/>
</dbReference>
<dbReference type="EMBL" id="CP002686">
    <property type="protein sequence ID" value="AEE76848.1"/>
    <property type="molecule type" value="Genomic_DNA"/>
</dbReference>
<dbReference type="EMBL" id="AY087597">
    <property type="protein sequence ID" value="AAM65139.1"/>
    <property type="status" value="ALT_INIT"/>
    <property type="molecule type" value="mRNA"/>
</dbReference>
<dbReference type="PIR" id="T52103">
    <property type="entry name" value="T52103"/>
</dbReference>
<dbReference type="RefSeq" id="NP_189047.1">
    <property type="nucleotide sequence ID" value="NM_113310.4"/>
</dbReference>
<dbReference type="SMR" id="Q8LAU9"/>
<dbReference type="FunCoup" id="Q8LAU9">
    <property type="interactions" value="395"/>
</dbReference>
<dbReference type="IntAct" id="Q8LAU9">
    <property type="interactions" value="1"/>
</dbReference>
<dbReference type="STRING" id="3702.Q8LAU9"/>
<dbReference type="PaxDb" id="3702-AT3G24050.1"/>
<dbReference type="ProteomicsDB" id="230445"/>
<dbReference type="EnsemblPlants" id="AT3G24050.1">
    <property type="protein sequence ID" value="AT3G24050.1"/>
    <property type="gene ID" value="AT3G24050"/>
</dbReference>
<dbReference type="GeneID" id="821990"/>
<dbReference type="Gramene" id="AT3G24050.1">
    <property type="protein sequence ID" value="AT3G24050.1"/>
    <property type="gene ID" value="AT3G24050"/>
</dbReference>
<dbReference type="KEGG" id="ath:AT3G24050"/>
<dbReference type="Araport" id="AT3G24050"/>
<dbReference type="TAIR" id="AT3G24050">
    <property type="gene designation" value="GATA1"/>
</dbReference>
<dbReference type="eggNOG" id="KOG1601">
    <property type="taxonomic scope" value="Eukaryota"/>
</dbReference>
<dbReference type="HOGENOM" id="CLU_045755_4_1_1"/>
<dbReference type="InParanoid" id="Q8LAU9"/>
<dbReference type="OMA" id="QWRAGPF"/>
<dbReference type="OrthoDB" id="2162994at2759"/>
<dbReference type="PhylomeDB" id="Q8LAU9"/>
<dbReference type="PRO" id="PR:Q8LAU9"/>
<dbReference type="Proteomes" id="UP000006548">
    <property type="component" value="Chromosome 3"/>
</dbReference>
<dbReference type="ExpressionAtlas" id="Q8LAU9">
    <property type="expression patterns" value="baseline and differential"/>
</dbReference>
<dbReference type="GO" id="GO:0005634">
    <property type="term" value="C:nucleus"/>
    <property type="evidence" value="ECO:0007669"/>
    <property type="project" value="UniProtKB-SubCell"/>
</dbReference>
<dbReference type="GO" id="GO:0003700">
    <property type="term" value="F:DNA-binding transcription factor activity"/>
    <property type="evidence" value="ECO:0000250"/>
    <property type="project" value="TAIR"/>
</dbReference>
<dbReference type="GO" id="GO:0000976">
    <property type="term" value="F:transcription cis-regulatory region binding"/>
    <property type="evidence" value="ECO:0000314"/>
    <property type="project" value="TAIR"/>
</dbReference>
<dbReference type="GO" id="GO:0008270">
    <property type="term" value="F:zinc ion binding"/>
    <property type="evidence" value="ECO:0007669"/>
    <property type="project" value="UniProtKB-KW"/>
</dbReference>
<dbReference type="GO" id="GO:0007623">
    <property type="term" value="P:circadian rhythm"/>
    <property type="evidence" value="ECO:0000270"/>
    <property type="project" value="TAIR"/>
</dbReference>
<dbReference type="CDD" id="cd00202">
    <property type="entry name" value="ZnF_GATA"/>
    <property type="match status" value="1"/>
</dbReference>
<dbReference type="FunFam" id="3.30.50.10:FF:000018">
    <property type="entry name" value="GATA transcription factor"/>
    <property type="match status" value="1"/>
</dbReference>
<dbReference type="Gene3D" id="3.30.50.10">
    <property type="entry name" value="Erythroid Transcription Factor GATA-1, subunit A"/>
    <property type="match status" value="1"/>
</dbReference>
<dbReference type="InterPro" id="IPR051140">
    <property type="entry name" value="GATA_TF"/>
</dbReference>
<dbReference type="InterPro" id="IPR000679">
    <property type="entry name" value="Znf_GATA"/>
</dbReference>
<dbReference type="InterPro" id="IPR013088">
    <property type="entry name" value="Znf_NHR/GATA"/>
</dbReference>
<dbReference type="PANTHER" id="PTHR45658">
    <property type="entry name" value="GATA TRANSCRIPTION FACTOR"/>
    <property type="match status" value="1"/>
</dbReference>
<dbReference type="PANTHER" id="PTHR45658:SF42">
    <property type="entry name" value="GATA TRANSCRIPTION FACTOR 1"/>
    <property type="match status" value="1"/>
</dbReference>
<dbReference type="Pfam" id="PF00320">
    <property type="entry name" value="GATA"/>
    <property type="match status" value="1"/>
</dbReference>
<dbReference type="SMART" id="SM00401">
    <property type="entry name" value="ZnF_GATA"/>
    <property type="match status" value="1"/>
</dbReference>
<dbReference type="SUPFAM" id="SSF57716">
    <property type="entry name" value="Glucocorticoid receptor-like (DNA-binding domain)"/>
    <property type="match status" value="1"/>
</dbReference>
<dbReference type="PROSITE" id="PS00344">
    <property type="entry name" value="GATA_ZN_FINGER_1"/>
    <property type="match status" value="1"/>
</dbReference>
<dbReference type="PROSITE" id="PS50114">
    <property type="entry name" value="GATA_ZN_FINGER_2"/>
    <property type="match status" value="1"/>
</dbReference>
<reference key="1">
    <citation type="journal article" date="2002" name="Plant Mol. Biol.">
        <title>Arabidopsis thaliana GATA factors: organisation, expression and DNA-binding characteristics.</title>
        <authorList>
            <person name="Teakle G.R."/>
            <person name="Manfield I.W."/>
            <person name="Graham J.F."/>
            <person name="Gilmartin P.M."/>
        </authorList>
    </citation>
    <scope>NUCLEOTIDE SEQUENCE [MRNA]</scope>
    <scope>FUNCTION</scope>
    <scope>TISSUE SPECIFICITY</scope>
    <source>
        <strain>cv. Columbia</strain>
    </source>
</reference>
<reference key="2">
    <citation type="journal article" date="2000" name="DNA Res.">
        <title>Structural analysis of Arabidopsis thaliana chromosome 3. II. Sequence features of the 4,251,695 bp regions covered by 90 P1, TAC and BAC clones.</title>
        <authorList>
            <person name="Kaneko T."/>
            <person name="Katoh T."/>
            <person name="Sato S."/>
            <person name="Nakamura Y."/>
            <person name="Asamizu E."/>
            <person name="Tabata S."/>
        </authorList>
    </citation>
    <scope>NUCLEOTIDE SEQUENCE [LARGE SCALE GENOMIC DNA]</scope>
    <source>
        <strain>cv. Columbia</strain>
    </source>
</reference>
<reference key="3">
    <citation type="journal article" date="2017" name="Plant J.">
        <title>Araport11: a complete reannotation of the Arabidopsis thaliana reference genome.</title>
        <authorList>
            <person name="Cheng C.Y."/>
            <person name="Krishnakumar V."/>
            <person name="Chan A.P."/>
            <person name="Thibaud-Nissen F."/>
            <person name="Schobel S."/>
            <person name="Town C.D."/>
        </authorList>
    </citation>
    <scope>GENOME REANNOTATION</scope>
    <source>
        <strain>cv. Columbia</strain>
    </source>
</reference>
<reference key="4">
    <citation type="submission" date="2002-03" db="EMBL/GenBank/DDBJ databases">
        <title>Full-length cDNA from Arabidopsis thaliana.</title>
        <authorList>
            <person name="Brover V.V."/>
            <person name="Troukhan M.E."/>
            <person name="Alexandrov N.A."/>
            <person name="Lu Y.-P."/>
            <person name="Flavell R.B."/>
            <person name="Feldmann K.A."/>
        </authorList>
    </citation>
    <scope>NUCLEOTIDE SEQUENCE [LARGE SCALE MRNA]</scope>
</reference>
<reference key="5">
    <citation type="journal article" date="2004" name="Plant Physiol.">
        <title>The GATA family of transcription factors in Arabidopsis and rice.</title>
        <authorList>
            <person name="Reyes J.C."/>
            <person name="Muro-Pastor M.I."/>
            <person name="Florencio F.J."/>
        </authorList>
    </citation>
    <scope>GENE FAMILY ORGANIZATION</scope>
</reference>
<feature type="chain" id="PRO_0000083430" description="GATA transcription factor 1">
    <location>
        <begin position="1"/>
        <end position="274"/>
    </location>
</feature>
<feature type="zinc finger region" description="GATA-type" evidence="2">
    <location>
        <begin position="190"/>
        <end position="244"/>
    </location>
</feature>
<feature type="region of interest" description="Disordered" evidence="3">
    <location>
        <begin position="1"/>
        <end position="39"/>
    </location>
</feature>
<feature type="region of interest" description="Disordered" evidence="3">
    <location>
        <begin position="102"/>
        <end position="132"/>
    </location>
</feature>
<feature type="short sequence motif" description="Nuclear localization signal" evidence="1">
    <location>
        <begin position="152"/>
        <end position="159"/>
    </location>
</feature>
<feature type="sequence conflict" description="In Ref. 4; AAM65139." evidence="5" ref="4">
    <original>E</original>
    <variation>Q</variation>
    <location>
        <position position="62"/>
    </location>
</feature>